<organism>
    <name type="scientific">Staphylococcus aureus (strain COL)</name>
    <dbReference type="NCBI Taxonomy" id="93062"/>
    <lineage>
        <taxon>Bacteria</taxon>
        <taxon>Bacillati</taxon>
        <taxon>Bacillota</taxon>
        <taxon>Bacilli</taxon>
        <taxon>Bacillales</taxon>
        <taxon>Staphylococcaceae</taxon>
        <taxon>Staphylococcus</taxon>
    </lineage>
</organism>
<reference key="1">
    <citation type="journal article" date="2005" name="J. Bacteriol.">
        <title>Insights on evolution of virulence and resistance from the complete genome analysis of an early methicillin-resistant Staphylococcus aureus strain and a biofilm-producing methicillin-resistant Staphylococcus epidermidis strain.</title>
        <authorList>
            <person name="Gill S.R."/>
            <person name="Fouts D.E."/>
            <person name="Archer G.L."/>
            <person name="Mongodin E.F."/>
            <person name="DeBoy R.T."/>
            <person name="Ravel J."/>
            <person name="Paulsen I.T."/>
            <person name="Kolonay J.F."/>
            <person name="Brinkac L.M."/>
            <person name="Beanan M.J."/>
            <person name="Dodson R.J."/>
            <person name="Daugherty S.C."/>
            <person name="Madupu R."/>
            <person name="Angiuoli S.V."/>
            <person name="Durkin A.S."/>
            <person name="Haft D.H."/>
            <person name="Vamathevan J.J."/>
            <person name="Khouri H."/>
            <person name="Utterback T.R."/>
            <person name="Lee C."/>
            <person name="Dimitrov G."/>
            <person name="Jiang L."/>
            <person name="Qin H."/>
            <person name="Weidman J."/>
            <person name="Tran K."/>
            <person name="Kang K.H."/>
            <person name="Hance I.R."/>
            <person name="Nelson K.E."/>
            <person name="Fraser C.M."/>
        </authorList>
    </citation>
    <scope>NUCLEOTIDE SEQUENCE [LARGE SCALE GENOMIC DNA]</scope>
    <source>
        <strain>COL</strain>
    </source>
</reference>
<feature type="chain" id="PRO_0000170476" description="Alkaline shock protein 23">
    <location>
        <begin position="1"/>
        <end position="169"/>
    </location>
</feature>
<feature type="region of interest" description="Disordered" evidence="2">
    <location>
        <begin position="1"/>
        <end position="40"/>
    </location>
</feature>
<feature type="region of interest" description="Disordered" evidence="2">
    <location>
        <begin position="148"/>
        <end position="169"/>
    </location>
</feature>
<feature type="compositionally biased region" description="Basic and acidic residues" evidence="2">
    <location>
        <begin position="19"/>
        <end position="29"/>
    </location>
</feature>
<feature type="compositionally biased region" description="Basic and acidic residues" evidence="2">
    <location>
        <begin position="148"/>
        <end position="158"/>
    </location>
</feature>
<feature type="compositionally biased region" description="Low complexity" evidence="2">
    <location>
        <begin position="159"/>
        <end position="169"/>
    </location>
</feature>
<comment type="function">
    <text evidence="1">May play a key role in alkaline pH tolerance.</text>
</comment>
<comment type="similarity">
    <text evidence="3">Belongs to the asp23 family.</text>
</comment>
<protein>
    <recommendedName>
        <fullName>Alkaline shock protein 23</fullName>
    </recommendedName>
</protein>
<accession>Q5HE23</accession>
<name>ASP23_STAAC</name>
<proteinExistence type="inferred from homology"/>
<dbReference type="EMBL" id="CP000046">
    <property type="protein sequence ID" value="AAW38479.1"/>
    <property type="molecule type" value="Genomic_DNA"/>
</dbReference>
<dbReference type="RefSeq" id="WP_000215236.1">
    <property type="nucleotide sequence ID" value="NZ_JBGOFO010000004.1"/>
</dbReference>
<dbReference type="SMR" id="Q5HE23"/>
<dbReference type="KEGG" id="sac:SACOL2173"/>
<dbReference type="HOGENOM" id="CLU_113198_1_1_9"/>
<dbReference type="Proteomes" id="UP000000530">
    <property type="component" value="Chromosome"/>
</dbReference>
<dbReference type="InterPro" id="IPR005531">
    <property type="entry name" value="Asp23"/>
</dbReference>
<dbReference type="PANTHER" id="PTHR34297:SF3">
    <property type="entry name" value="ALKALINE SHOCK PROTEIN 23"/>
    <property type="match status" value="1"/>
</dbReference>
<dbReference type="PANTHER" id="PTHR34297">
    <property type="entry name" value="HYPOTHETICAL CYTOSOLIC PROTEIN-RELATED"/>
    <property type="match status" value="1"/>
</dbReference>
<dbReference type="Pfam" id="PF03780">
    <property type="entry name" value="Asp23"/>
    <property type="match status" value="1"/>
</dbReference>
<gene>
    <name type="primary">asp23</name>
    <name type="ordered locus">SACOL2173</name>
</gene>
<evidence type="ECO:0000250" key="1"/>
<evidence type="ECO:0000256" key="2">
    <source>
        <dbReference type="SAM" id="MobiDB-lite"/>
    </source>
</evidence>
<evidence type="ECO:0000305" key="3"/>
<sequence length="169" mass="19191">MTVDNNKAKQAYDNQTGVNEKEREERQKQQEQNQEPQFKNKLTFSDEVVEKIAGIAAREVKGILDMKGGLTDTFTNAFSSGNNVTQGVSVEVGEKQAAVDLKVILEYGESAPKIFRKVTELVKEQVKYITGLDVVEVNMQVDDVMTQKEWKQKHEKNNENNNQERQGLQ</sequence>